<sequence>MQTNLLKPKIISVEALTANQAKVVMEPFERGYGHTLGNALRRVLLSSMVGYAPTEVAIAGVVHEYSTLDGVQEDVVNLLLNLKGIVFKLQSRDEVIINLRKEGPGVVTAKDIDLPHDVEIMNPDHVIAHLSAGGKLDMQIKVEKGRGYVPGNVRQYNDEATKIIGHIVLDASFSPVSRVSYAVESARVEQRTDLDRLVMTIETNGVLSPEEAIRQAASILVDQLVVFAALESSEVSGDLAPSRSSMVDPMLMRPVDDLELTVRSANCLKAENIYYIGDLIQRTENELLKTPNLGRKSLNEIKDVLAARGLSLGMKLESWPPANLEK</sequence>
<organism>
    <name type="scientific">Polynucleobacter necessarius subsp. necessarius (strain STIR1)</name>
    <dbReference type="NCBI Taxonomy" id="452638"/>
    <lineage>
        <taxon>Bacteria</taxon>
        <taxon>Pseudomonadati</taxon>
        <taxon>Pseudomonadota</taxon>
        <taxon>Betaproteobacteria</taxon>
        <taxon>Burkholderiales</taxon>
        <taxon>Burkholderiaceae</taxon>
        <taxon>Polynucleobacter</taxon>
    </lineage>
</organism>
<dbReference type="EC" id="2.7.7.6" evidence="1"/>
<dbReference type="EMBL" id="CP001010">
    <property type="protein sequence ID" value="ACB43404.1"/>
    <property type="molecule type" value="Genomic_DNA"/>
</dbReference>
<dbReference type="SMR" id="B1XSS7"/>
<dbReference type="STRING" id="452638.Pnec_0076"/>
<dbReference type="KEGG" id="pne:Pnec_0076"/>
<dbReference type="eggNOG" id="COG0202">
    <property type="taxonomic scope" value="Bacteria"/>
</dbReference>
<dbReference type="HOGENOM" id="CLU_053084_0_0_4"/>
<dbReference type="OrthoDB" id="9805706at2"/>
<dbReference type="GO" id="GO:0005737">
    <property type="term" value="C:cytoplasm"/>
    <property type="evidence" value="ECO:0007669"/>
    <property type="project" value="UniProtKB-ARBA"/>
</dbReference>
<dbReference type="GO" id="GO:0000428">
    <property type="term" value="C:DNA-directed RNA polymerase complex"/>
    <property type="evidence" value="ECO:0007669"/>
    <property type="project" value="UniProtKB-KW"/>
</dbReference>
<dbReference type="GO" id="GO:0003677">
    <property type="term" value="F:DNA binding"/>
    <property type="evidence" value="ECO:0007669"/>
    <property type="project" value="UniProtKB-UniRule"/>
</dbReference>
<dbReference type="GO" id="GO:0003899">
    <property type="term" value="F:DNA-directed RNA polymerase activity"/>
    <property type="evidence" value="ECO:0007669"/>
    <property type="project" value="UniProtKB-UniRule"/>
</dbReference>
<dbReference type="GO" id="GO:0046983">
    <property type="term" value="F:protein dimerization activity"/>
    <property type="evidence" value="ECO:0007669"/>
    <property type="project" value="InterPro"/>
</dbReference>
<dbReference type="GO" id="GO:0006351">
    <property type="term" value="P:DNA-templated transcription"/>
    <property type="evidence" value="ECO:0007669"/>
    <property type="project" value="UniProtKB-UniRule"/>
</dbReference>
<dbReference type="CDD" id="cd06928">
    <property type="entry name" value="RNAP_alpha_NTD"/>
    <property type="match status" value="1"/>
</dbReference>
<dbReference type="FunFam" id="1.10.150.20:FF:000001">
    <property type="entry name" value="DNA-directed RNA polymerase subunit alpha"/>
    <property type="match status" value="1"/>
</dbReference>
<dbReference type="FunFam" id="2.170.120.12:FF:000001">
    <property type="entry name" value="DNA-directed RNA polymerase subunit alpha"/>
    <property type="match status" value="1"/>
</dbReference>
<dbReference type="Gene3D" id="1.10.150.20">
    <property type="entry name" value="5' to 3' exonuclease, C-terminal subdomain"/>
    <property type="match status" value="1"/>
</dbReference>
<dbReference type="Gene3D" id="2.170.120.12">
    <property type="entry name" value="DNA-directed RNA polymerase, insert domain"/>
    <property type="match status" value="1"/>
</dbReference>
<dbReference type="Gene3D" id="3.30.1360.10">
    <property type="entry name" value="RNA polymerase, RBP11-like subunit"/>
    <property type="match status" value="1"/>
</dbReference>
<dbReference type="HAMAP" id="MF_00059">
    <property type="entry name" value="RNApol_bact_RpoA"/>
    <property type="match status" value="1"/>
</dbReference>
<dbReference type="InterPro" id="IPR011262">
    <property type="entry name" value="DNA-dir_RNA_pol_insert"/>
</dbReference>
<dbReference type="InterPro" id="IPR011263">
    <property type="entry name" value="DNA-dir_RNA_pol_RpoA/D/Rpb3"/>
</dbReference>
<dbReference type="InterPro" id="IPR011773">
    <property type="entry name" value="DNA-dir_RpoA"/>
</dbReference>
<dbReference type="InterPro" id="IPR036603">
    <property type="entry name" value="RBP11-like"/>
</dbReference>
<dbReference type="InterPro" id="IPR011260">
    <property type="entry name" value="RNAP_asu_C"/>
</dbReference>
<dbReference type="InterPro" id="IPR036643">
    <property type="entry name" value="RNApol_insert_sf"/>
</dbReference>
<dbReference type="NCBIfam" id="NF003513">
    <property type="entry name" value="PRK05182.1-2"/>
    <property type="match status" value="1"/>
</dbReference>
<dbReference type="NCBIfam" id="NF003519">
    <property type="entry name" value="PRK05182.2-5"/>
    <property type="match status" value="1"/>
</dbReference>
<dbReference type="NCBIfam" id="TIGR02027">
    <property type="entry name" value="rpoA"/>
    <property type="match status" value="1"/>
</dbReference>
<dbReference type="Pfam" id="PF01000">
    <property type="entry name" value="RNA_pol_A_bac"/>
    <property type="match status" value="1"/>
</dbReference>
<dbReference type="Pfam" id="PF03118">
    <property type="entry name" value="RNA_pol_A_CTD"/>
    <property type="match status" value="1"/>
</dbReference>
<dbReference type="Pfam" id="PF01193">
    <property type="entry name" value="RNA_pol_L"/>
    <property type="match status" value="1"/>
</dbReference>
<dbReference type="SMART" id="SM00662">
    <property type="entry name" value="RPOLD"/>
    <property type="match status" value="1"/>
</dbReference>
<dbReference type="SUPFAM" id="SSF47789">
    <property type="entry name" value="C-terminal domain of RNA polymerase alpha subunit"/>
    <property type="match status" value="1"/>
</dbReference>
<dbReference type="SUPFAM" id="SSF56553">
    <property type="entry name" value="Insert subdomain of RNA polymerase alpha subunit"/>
    <property type="match status" value="1"/>
</dbReference>
<dbReference type="SUPFAM" id="SSF55257">
    <property type="entry name" value="RBP11-like subunits of RNA polymerase"/>
    <property type="match status" value="1"/>
</dbReference>
<gene>
    <name evidence="1" type="primary">rpoA</name>
    <name type="ordered locus">Pnec_0076</name>
</gene>
<evidence type="ECO:0000255" key="1">
    <source>
        <dbReference type="HAMAP-Rule" id="MF_00059"/>
    </source>
</evidence>
<name>RPOA_POLNS</name>
<accession>B1XSS7</accession>
<proteinExistence type="inferred from homology"/>
<feature type="chain" id="PRO_1000091961" description="DNA-directed RNA polymerase subunit alpha">
    <location>
        <begin position="1"/>
        <end position="326"/>
    </location>
</feature>
<feature type="region of interest" description="Alpha N-terminal domain (alpha-NTD)" evidence="1">
    <location>
        <begin position="1"/>
        <end position="231"/>
    </location>
</feature>
<feature type="region of interest" description="Alpha C-terminal domain (alpha-CTD)" evidence="1">
    <location>
        <begin position="247"/>
        <end position="326"/>
    </location>
</feature>
<protein>
    <recommendedName>
        <fullName evidence="1">DNA-directed RNA polymerase subunit alpha</fullName>
        <shortName evidence="1">RNAP subunit alpha</shortName>
        <ecNumber evidence="1">2.7.7.6</ecNumber>
    </recommendedName>
    <alternativeName>
        <fullName evidence="1">RNA polymerase subunit alpha</fullName>
    </alternativeName>
    <alternativeName>
        <fullName evidence="1">Transcriptase subunit alpha</fullName>
    </alternativeName>
</protein>
<comment type="function">
    <text evidence="1">DNA-dependent RNA polymerase catalyzes the transcription of DNA into RNA using the four ribonucleoside triphosphates as substrates.</text>
</comment>
<comment type="catalytic activity">
    <reaction evidence="1">
        <text>RNA(n) + a ribonucleoside 5'-triphosphate = RNA(n+1) + diphosphate</text>
        <dbReference type="Rhea" id="RHEA:21248"/>
        <dbReference type="Rhea" id="RHEA-COMP:14527"/>
        <dbReference type="Rhea" id="RHEA-COMP:17342"/>
        <dbReference type="ChEBI" id="CHEBI:33019"/>
        <dbReference type="ChEBI" id="CHEBI:61557"/>
        <dbReference type="ChEBI" id="CHEBI:140395"/>
        <dbReference type="EC" id="2.7.7.6"/>
    </reaction>
</comment>
<comment type="subunit">
    <text evidence="1">Homodimer. The RNAP catalytic core consists of 2 alpha, 1 beta, 1 beta' and 1 omega subunit. When a sigma factor is associated with the core the holoenzyme is formed, which can initiate transcription.</text>
</comment>
<comment type="domain">
    <text evidence="1">The N-terminal domain is essential for RNAP assembly and basal transcription, whereas the C-terminal domain is involved in interaction with transcriptional regulators and with upstream promoter elements.</text>
</comment>
<comment type="similarity">
    <text evidence="1">Belongs to the RNA polymerase alpha chain family.</text>
</comment>
<reference key="1">
    <citation type="journal article" date="2013" name="Proc. Natl. Acad. Sci. U.S.A.">
        <title>Polynucleobacter necessarius, a model for genome reduction in both free-living and symbiotic bacteria.</title>
        <authorList>
            <person name="Boscaro V."/>
            <person name="Felletti M."/>
            <person name="Vannini C."/>
            <person name="Ackerman M.S."/>
            <person name="Chain P.S."/>
            <person name="Malfatti S."/>
            <person name="Vergez L.M."/>
            <person name="Shin M."/>
            <person name="Doak T.G."/>
            <person name="Lynch M."/>
            <person name="Petroni G."/>
        </authorList>
    </citation>
    <scope>NUCLEOTIDE SEQUENCE [LARGE SCALE GENOMIC DNA]</scope>
    <source>
        <strain>STIR1</strain>
    </source>
</reference>
<keyword id="KW-0240">DNA-directed RNA polymerase</keyword>
<keyword id="KW-0548">Nucleotidyltransferase</keyword>
<keyword id="KW-0804">Transcription</keyword>
<keyword id="KW-0808">Transferase</keyword>